<organism>
    <name type="scientific">Shigella sonnei (strain Ss046)</name>
    <dbReference type="NCBI Taxonomy" id="300269"/>
    <lineage>
        <taxon>Bacteria</taxon>
        <taxon>Pseudomonadati</taxon>
        <taxon>Pseudomonadota</taxon>
        <taxon>Gammaproteobacteria</taxon>
        <taxon>Enterobacterales</taxon>
        <taxon>Enterobacteriaceae</taxon>
        <taxon>Shigella</taxon>
    </lineage>
</organism>
<proteinExistence type="inferred from homology"/>
<comment type="catalytic activity">
    <reaction evidence="1">
        <text>sn-glycerol 3-phosphate + an acyl-CoA = a 1-acyl-sn-glycero-3-phosphate + CoA</text>
        <dbReference type="Rhea" id="RHEA:15325"/>
        <dbReference type="ChEBI" id="CHEBI:57287"/>
        <dbReference type="ChEBI" id="CHEBI:57597"/>
        <dbReference type="ChEBI" id="CHEBI:57970"/>
        <dbReference type="ChEBI" id="CHEBI:58342"/>
        <dbReference type="EC" id="2.3.1.15"/>
    </reaction>
</comment>
<comment type="pathway">
    <text evidence="1">Phospholipid metabolism; CDP-diacylglycerol biosynthesis; CDP-diacylglycerol from sn-glycerol 3-phosphate: step 1/3.</text>
</comment>
<comment type="subcellular location">
    <subcellularLocation>
        <location evidence="1">Cell inner membrane</location>
        <topology evidence="1">Peripheral membrane protein</topology>
        <orientation evidence="1">Cytoplasmic side</orientation>
    </subcellularLocation>
</comment>
<comment type="domain">
    <text evidence="1">The HXXXXD motif is essential for acyltransferase activity and may constitute the binding site for the phosphate moiety of the glycerol-3-phosphate.</text>
</comment>
<comment type="similarity">
    <text evidence="1">Belongs to the GPAT/DAPAT family.</text>
</comment>
<dbReference type="EC" id="2.3.1.15" evidence="1"/>
<dbReference type="EMBL" id="CP000038">
    <property type="protein sequence ID" value="AAZ90719.1"/>
    <property type="molecule type" value="Genomic_DNA"/>
</dbReference>
<dbReference type="SMR" id="Q3YUU3"/>
<dbReference type="KEGG" id="ssn:SSON_4221"/>
<dbReference type="HOGENOM" id="CLU_015407_0_0_6"/>
<dbReference type="UniPathway" id="UPA00557">
    <property type="reaction ID" value="UER00612"/>
</dbReference>
<dbReference type="Proteomes" id="UP000002529">
    <property type="component" value="Chromosome"/>
</dbReference>
<dbReference type="GO" id="GO:0005886">
    <property type="term" value="C:plasma membrane"/>
    <property type="evidence" value="ECO:0007669"/>
    <property type="project" value="UniProtKB-SubCell"/>
</dbReference>
<dbReference type="GO" id="GO:0004366">
    <property type="term" value="F:glycerol-3-phosphate O-acyltransferase activity"/>
    <property type="evidence" value="ECO:0007669"/>
    <property type="project" value="UniProtKB-UniRule"/>
</dbReference>
<dbReference type="GO" id="GO:0016024">
    <property type="term" value="P:CDP-diacylglycerol biosynthetic process"/>
    <property type="evidence" value="ECO:0007669"/>
    <property type="project" value="UniProtKB-UniRule"/>
</dbReference>
<dbReference type="GO" id="GO:0006631">
    <property type="term" value="P:fatty acid metabolic process"/>
    <property type="evidence" value="ECO:0007669"/>
    <property type="project" value="TreeGrafter"/>
</dbReference>
<dbReference type="CDD" id="cd07993">
    <property type="entry name" value="LPLAT_DHAPAT-like"/>
    <property type="match status" value="1"/>
</dbReference>
<dbReference type="HAMAP" id="MF_00393">
    <property type="entry name" value="Glyc3P_acyltrans"/>
    <property type="match status" value="1"/>
</dbReference>
<dbReference type="InterPro" id="IPR022284">
    <property type="entry name" value="GPAT/DHAPAT"/>
</dbReference>
<dbReference type="InterPro" id="IPR045520">
    <property type="entry name" value="GPAT/DHAPAT_C"/>
</dbReference>
<dbReference type="InterPro" id="IPR041728">
    <property type="entry name" value="GPAT/DHAPAT_LPLAT"/>
</dbReference>
<dbReference type="InterPro" id="IPR028354">
    <property type="entry name" value="GPAT_PlsB"/>
</dbReference>
<dbReference type="InterPro" id="IPR002123">
    <property type="entry name" value="Plipid/glycerol_acylTrfase"/>
</dbReference>
<dbReference type="NCBIfam" id="TIGR03703">
    <property type="entry name" value="plsB"/>
    <property type="match status" value="1"/>
</dbReference>
<dbReference type="NCBIfam" id="NF003441">
    <property type="entry name" value="PRK04974.1"/>
    <property type="match status" value="1"/>
</dbReference>
<dbReference type="PANTHER" id="PTHR12563:SF17">
    <property type="entry name" value="DIHYDROXYACETONE PHOSPHATE ACYLTRANSFERASE"/>
    <property type="match status" value="1"/>
</dbReference>
<dbReference type="PANTHER" id="PTHR12563">
    <property type="entry name" value="GLYCEROL-3-PHOSPHATE ACYLTRANSFERASE"/>
    <property type="match status" value="1"/>
</dbReference>
<dbReference type="Pfam" id="PF01553">
    <property type="entry name" value="Acyltransferase"/>
    <property type="match status" value="1"/>
</dbReference>
<dbReference type="Pfam" id="PF19277">
    <property type="entry name" value="GPAT_C"/>
    <property type="match status" value="1"/>
</dbReference>
<dbReference type="PIRSF" id="PIRSF500064">
    <property type="entry name" value="GPAT"/>
    <property type="match status" value="1"/>
</dbReference>
<dbReference type="PIRSF" id="PIRSF000437">
    <property type="entry name" value="GPAT_DHAPAT"/>
    <property type="match status" value="1"/>
</dbReference>
<dbReference type="SMART" id="SM00563">
    <property type="entry name" value="PlsC"/>
    <property type="match status" value="1"/>
</dbReference>
<dbReference type="SUPFAM" id="SSF69593">
    <property type="entry name" value="Glycerol-3-phosphate (1)-acyltransferase"/>
    <property type="match status" value="1"/>
</dbReference>
<evidence type="ECO:0000255" key="1">
    <source>
        <dbReference type="HAMAP-Rule" id="MF_00393"/>
    </source>
</evidence>
<accession>Q3YUU3</accession>
<keyword id="KW-0012">Acyltransferase</keyword>
<keyword id="KW-0997">Cell inner membrane</keyword>
<keyword id="KW-1003">Cell membrane</keyword>
<keyword id="KW-0444">Lipid biosynthesis</keyword>
<keyword id="KW-0443">Lipid metabolism</keyword>
<keyword id="KW-0472">Membrane</keyword>
<keyword id="KW-0594">Phospholipid biosynthesis</keyword>
<keyword id="KW-1208">Phospholipid metabolism</keyword>
<keyword id="KW-1185">Reference proteome</keyword>
<keyword id="KW-0808">Transferase</keyword>
<sequence>MTFCYPCRAFALLTRGFTSFMSGWPRIYYKLLNLPLSILVKSKSIPADPAPELGLDTSRPIMYVLPYNSKADLLTLRAQCLAHDLPDPLEPLEIDGTLLPRYVFIHGGPRVFTYYTPKEESIKLFHDYLDLHRSNPNLDVQMVPVSVMFGRAPGREKGEVNPPLRMLNGVQKFFAVLWLGRDSFVRFSPSVSLRRMADEHGTDKTIAQKLARVARMHFARQRLAAVGPRLPARQDLFNKLLASRAIAKAVEDEARSKKISHEKAQQNAIALMEEIAANFSYEMIRLTDRILGFTWNRLYQGINVHNAERVRQLAHDGHELVYVPCHRSHMDYLLLSYVLYHQGLVPPHIAAGINLNFWPAGPIFRRLGAFFIRRTFKGNKLYSTVFREYLGELFSRGYSVEYFVEGGRSRTGRLLDPKTGTLSMTIQAMLRGGTRPITLIPIYIGYEHVMEVGTYAKELRGATKEKESLPQMLRGLSKLRNLGQGYVNFGEPMPLMTYLNQHVPDWRESIDPIEAVRPAWLTPTVNNIAADLMVRINNAGAANAMNLCCTALLASRQRSLTREQLTEQLNCYLDLMRNVPYSTDSTVPSASASELIDHALQMNKFEVEKDTIGDIIILPREQAVLMTYYRNNIAHMLVLPSLMAAIVTQHRHISRDVLMEHVNVLYPMLKAELFLRWDRDELPDVIDALANEMQRQGLITLQDDELHINPAHSRPLQLLAAGARETLQRYAITFWLLSANPSINRGTLEKESRTVAQRLSVLHGINAPEFFDKAVFSSLVLTLRDEGYISDSGDAEPAETMKVYQLLAELITSDVRLTIESATQGEG</sequence>
<reference key="1">
    <citation type="journal article" date="2005" name="Nucleic Acids Res.">
        <title>Genome dynamics and diversity of Shigella species, the etiologic agents of bacillary dysentery.</title>
        <authorList>
            <person name="Yang F."/>
            <person name="Yang J."/>
            <person name="Zhang X."/>
            <person name="Chen L."/>
            <person name="Jiang Y."/>
            <person name="Yan Y."/>
            <person name="Tang X."/>
            <person name="Wang J."/>
            <person name="Xiong Z."/>
            <person name="Dong J."/>
            <person name="Xue Y."/>
            <person name="Zhu Y."/>
            <person name="Xu X."/>
            <person name="Sun L."/>
            <person name="Chen S."/>
            <person name="Nie H."/>
            <person name="Peng J."/>
            <person name="Xu J."/>
            <person name="Wang Y."/>
            <person name="Yuan Z."/>
            <person name="Wen Y."/>
            <person name="Yao Z."/>
            <person name="Shen Y."/>
            <person name="Qiang B."/>
            <person name="Hou Y."/>
            <person name="Yu J."/>
            <person name="Jin Q."/>
        </authorList>
    </citation>
    <scope>NUCLEOTIDE SEQUENCE [LARGE SCALE GENOMIC DNA]</scope>
    <source>
        <strain>Ss046</strain>
    </source>
</reference>
<gene>
    <name evidence="1" type="primary">plsB</name>
    <name type="ordered locus">SSON_4221</name>
</gene>
<name>PLSB_SHISS</name>
<protein>
    <recommendedName>
        <fullName evidence="1">Glycerol-3-phosphate acyltransferase</fullName>
        <shortName evidence="1">GPAT</shortName>
        <ecNumber evidence="1">2.3.1.15</ecNumber>
    </recommendedName>
</protein>
<feature type="chain" id="PRO_1000049467" description="Glycerol-3-phosphate acyltransferase">
    <location>
        <begin position="1"/>
        <end position="827"/>
    </location>
</feature>
<feature type="short sequence motif" description="HXXXXD motif">
    <location>
        <begin position="325"/>
        <end position="330"/>
    </location>
</feature>